<accession>P0CL50</accession>
<accession>Q9L894</accession>
<sequence length="267" mass="29245">MAEPLTVSPELTANYAYFFDLDGTLAEIKPHPDQVVVPHKILQLLDRLAAHNAGALALISGRSMTELDALAKPFRFPLAGVHGAERRDINGKTHIVRLPEAVVREVEALLRSTLVALPGTELESKGMAFALHYRQAPEHEAALLALAQHVTQHWPQLALQPGKCVVEIKPKGTNKGEAIAAFMQEAPFAGRIPVFVGDDLTDEAGFGVVNHAGGISVKVGVGATQAAWRLESVPDVWRWLEQINYPQQEQQVMNNRRDGYESFSRSI</sequence>
<proteinExistence type="inferred from homology"/>
<name>OTSB_SALTY</name>
<protein>
    <recommendedName>
        <fullName>Trehalose-phosphate phosphatase</fullName>
        <shortName>TPP</shortName>
        <ecNumber>3.1.3.12</ecNumber>
    </recommendedName>
    <alternativeName>
        <fullName>Trehalose 6-phosphate phosphatase</fullName>
    </alternativeName>
    <alternativeName>
        <fullName>Trehalose-phosphatase</fullName>
    </alternativeName>
</protein>
<comment type="function">
    <text evidence="1">Removes the phosphate from trehalose 6-phosphate to produce free trehalose.</text>
</comment>
<comment type="catalytic activity">
    <reaction>
        <text>alpha,alpha-trehalose 6-phosphate + H2O = alpha,alpha-trehalose + phosphate</text>
        <dbReference type="Rhea" id="RHEA:23420"/>
        <dbReference type="ChEBI" id="CHEBI:15377"/>
        <dbReference type="ChEBI" id="CHEBI:16551"/>
        <dbReference type="ChEBI" id="CHEBI:43474"/>
        <dbReference type="ChEBI" id="CHEBI:58429"/>
        <dbReference type="EC" id="3.1.3.12"/>
    </reaction>
</comment>
<comment type="cofactor">
    <cofactor evidence="1">
        <name>Mg(2+)</name>
        <dbReference type="ChEBI" id="CHEBI:18420"/>
    </cofactor>
</comment>
<comment type="pathway">
    <text>Glycan biosynthesis; trehalose biosynthesis.</text>
</comment>
<comment type="similarity">
    <text evidence="2">Belongs to the trehalose phosphatase family.</text>
</comment>
<feature type="chain" id="PRO_0000058102" description="Trehalose-phosphate phosphatase">
    <location>
        <begin position="1"/>
        <end position="267"/>
    </location>
</feature>
<feature type="active site" description="Nucleophile" evidence="1">
    <location>
        <position position="20"/>
    </location>
</feature>
<feature type="binding site" evidence="1">
    <location>
        <begin position="20"/>
        <end position="22"/>
    </location>
    <ligand>
        <name>substrate</name>
    </ligand>
</feature>
<feature type="binding site" evidence="1">
    <location>
        <position position="20"/>
    </location>
    <ligand>
        <name>Mg(2+)</name>
        <dbReference type="ChEBI" id="CHEBI:18420"/>
    </ligand>
</feature>
<feature type="binding site" evidence="1">
    <location>
        <position position="22"/>
    </location>
    <ligand>
        <name>Mg(2+)</name>
        <dbReference type="ChEBI" id="CHEBI:18420"/>
    </ligand>
</feature>
<feature type="binding site" evidence="1">
    <location>
        <position position="198"/>
    </location>
    <ligand>
        <name>Mg(2+)</name>
        <dbReference type="ChEBI" id="CHEBI:18420"/>
    </ligand>
</feature>
<evidence type="ECO:0000250" key="1"/>
<evidence type="ECO:0000305" key="2"/>
<gene>
    <name type="primary">otsB</name>
    <name type="ordered locus">STM1929</name>
</gene>
<reference key="1">
    <citation type="journal article" date="2001" name="Nature">
        <title>Complete genome sequence of Salmonella enterica serovar Typhimurium LT2.</title>
        <authorList>
            <person name="McClelland M."/>
            <person name="Sanderson K.E."/>
            <person name="Spieth J."/>
            <person name="Clifton S.W."/>
            <person name="Latreille P."/>
            <person name="Courtney L."/>
            <person name="Porwollik S."/>
            <person name="Ali J."/>
            <person name="Dante M."/>
            <person name="Du F."/>
            <person name="Hou S."/>
            <person name="Layman D."/>
            <person name="Leonard S."/>
            <person name="Nguyen C."/>
            <person name="Scott K."/>
            <person name="Holmes A."/>
            <person name="Grewal N."/>
            <person name="Mulvaney E."/>
            <person name="Ryan E."/>
            <person name="Sun H."/>
            <person name="Florea L."/>
            <person name="Miller W."/>
            <person name="Stoneking T."/>
            <person name="Nhan M."/>
            <person name="Waterston R."/>
            <person name="Wilson R.K."/>
        </authorList>
    </citation>
    <scope>NUCLEOTIDE SEQUENCE [LARGE SCALE GENOMIC DNA]</scope>
    <source>
        <strain>LT2 / SGSC1412 / ATCC 700720</strain>
    </source>
</reference>
<keyword id="KW-0378">Hydrolase</keyword>
<keyword id="KW-0460">Magnesium</keyword>
<keyword id="KW-0479">Metal-binding</keyword>
<keyword id="KW-1185">Reference proteome</keyword>
<dbReference type="EC" id="3.1.3.12"/>
<dbReference type="EMBL" id="AE006468">
    <property type="protein sequence ID" value="AAL20845.1"/>
    <property type="molecule type" value="Genomic_DNA"/>
</dbReference>
<dbReference type="RefSeq" id="NP_460886.1">
    <property type="nucleotide sequence ID" value="NC_003197.2"/>
</dbReference>
<dbReference type="RefSeq" id="WP_000830111.1">
    <property type="nucleotide sequence ID" value="NC_003197.2"/>
</dbReference>
<dbReference type="SMR" id="P0CL50"/>
<dbReference type="STRING" id="99287.STM1929"/>
<dbReference type="PaxDb" id="99287-STM1929"/>
<dbReference type="GeneID" id="1253450"/>
<dbReference type="KEGG" id="stm:STM1929"/>
<dbReference type="PATRIC" id="fig|99287.12.peg.2046"/>
<dbReference type="HOGENOM" id="CLU_037265_2_0_6"/>
<dbReference type="PhylomeDB" id="P0CL50"/>
<dbReference type="BioCyc" id="SENT99287:STM1929-MONOMER"/>
<dbReference type="UniPathway" id="UPA00299"/>
<dbReference type="Proteomes" id="UP000001014">
    <property type="component" value="Chromosome"/>
</dbReference>
<dbReference type="GO" id="GO:0000287">
    <property type="term" value="F:magnesium ion binding"/>
    <property type="evidence" value="ECO:0007669"/>
    <property type="project" value="UniProtKB-ARBA"/>
</dbReference>
<dbReference type="GO" id="GO:0004805">
    <property type="term" value="F:trehalose-phosphatase activity"/>
    <property type="evidence" value="ECO:0007669"/>
    <property type="project" value="UniProtKB-EC"/>
</dbReference>
<dbReference type="GO" id="GO:0005992">
    <property type="term" value="P:trehalose biosynthetic process"/>
    <property type="evidence" value="ECO:0007669"/>
    <property type="project" value="UniProtKB-UniPathway"/>
</dbReference>
<dbReference type="CDD" id="cd01627">
    <property type="entry name" value="HAD_TPP"/>
    <property type="match status" value="1"/>
</dbReference>
<dbReference type="Gene3D" id="3.40.50.1000">
    <property type="entry name" value="HAD superfamily/HAD-like"/>
    <property type="match status" value="1"/>
</dbReference>
<dbReference type="Gene3D" id="3.30.70.1020">
    <property type="entry name" value="Trehalose-6-phosphate phosphatase related protein, domain 2"/>
    <property type="match status" value="1"/>
</dbReference>
<dbReference type="InterPro" id="IPR036412">
    <property type="entry name" value="HAD-like_sf"/>
</dbReference>
<dbReference type="InterPro" id="IPR006379">
    <property type="entry name" value="HAD-SF_hydro_IIB"/>
</dbReference>
<dbReference type="InterPro" id="IPR023214">
    <property type="entry name" value="HAD_sf"/>
</dbReference>
<dbReference type="InterPro" id="IPR044651">
    <property type="entry name" value="OTSB-like"/>
</dbReference>
<dbReference type="InterPro" id="IPR003337">
    <property type="entry name" value="Trehalose_PPase"/>
</dbReference>
<dbReference type="NCBIfam" id="TIGR01484">
    <property type="entry name" value="HAD-SF-IIB"/>
    <property type="match status" value="1"/>
</dbReference>
<dbReference type="NCBIfam" id="NF007560">
    <property type="entry name" value="PRK10187.1"/>
    <property type="match status" value="1"/>
</dbReference>
<dbReference type="NCBIfam" id="TIGR00685">
    <property type="entry name" value="T6PP"/>
    <property type="match status" value="1"/>
</dbReference>
<dbReference type="PANTHER" id="PTHR43768">
    <property type="entry name" value="TREHALOSE 6-PHOSPHATE PHOSPHATASE"/>
    <property type="match status" value="1"/>
</dbReference>
<dbReference type="PANTHER" id="PTHR43768:SF3">
    <property type="entry name" value="TREHALOSE 6-PHOSPHATE PHOSPHATASE"/>
    <property type="match status" value="1"/>
</dbReference>
<dbReference type="Pfam" id="PF02358">
    <property type="entry name" value="Trehalose_PPase"/>
    <property type="match status" value="1"/>
</dbReference>
<dbReference type="SFLD" id="SFLDS00003">
    <property type="entry name" value="Haloacid_Dehalogenase"/>
    <property type="match status" value="1"/>
</dbReference>
<dbReference type="SFLD" id="SFLDF00032">
    <property type="entry name" value="trehalose-phosphatase"/>
    <property type="match status" value="1"/>
</dbReference>
<dbReference type="SUPFAM" id="SSF56784">
    <property type="entry name" value="HAD-like"/>
    <property type="match status" value="1"/>
</dbReference>
<organism>
    <name type="scientific">Salmonella typhimurium (strain LT2 / SGSC1412 / ATCC 700720)</name>
    <dbReference type="NCBI Taxonomy" id="99287"/>
    <lineage>
        <taxon>Bacteria</taxon>
        <taxon>Pseudomonadati</taxon>
        <taxon>Pseudomonadota</taxon>
        <taxon>Gammaproteobacteria</taxon>
        <taxon>Enterobacterales</taxon>
        <taxon>Enterobacteriaceae</taxon>
        <taxon>Salmonella</taxon>
    </lineage>
</organism>